<proteinExistence type="evidence at protein level"/>
<feature type="chain" id="PRO_0000328204" description="Hybrid signal transduction histidine kinase A">
    <location>
        <begin position="1"/>
        <end position="2150"/>
    </location>
</feature>
<feature type="transmembrane region" description="Helical" evidence="1">
    <location>
        <begin position="772"/>
        <end position="792"/>
    </location>
</feature>
<feature type="transmembrane region" description="Helical" evidence="1">
    <location>
        <begin position="1098"/>
        <end position="1118"/>
    </location>
</feature>
<feature type="domain" description="CHASE" evidence="2">
    <location>
        <begin position="838"/>
        <end position="1082"/>
    </location>
</feature>
<feature type="domain" description="PAS">
    <location>
        <begin position="1235"/>
        <end position="1317"/>
    </location>
</feature>
<feature type="domain" description="PAC">
    <location>
        <begin position="1321"/>
        <end position="1376"/>
    </location>
</feature>
<feature type="domain" description="Histidine kinase" evidence="3">
    <location>
        <begin position="1393"/>
        <end position="1620"/>
    </location>
</feature>
<feature type="domain" description="Response regulatory" evidence="4">
    <location>
        <begin position="2026"/>
        <end position="2146"/>
    </location>
</feature>
<feature type="region of interest" description="Disordered" evidence="5">
    <location>
        <begin position="1"/>
        <end position="41"/>
    </location>
</feature>
<feature type="region of interest" description="Disordered" evidence="5">
    <location>
        <begin position="68"/>
        <end position="149"/>
    </location>
</feature>
<feature type="region of interest" description="Disordered" evidence="5">
    <location>
        <begin position="184"/>
        <end position="267"/>
    </location>
</feature>
<feature type="region of interest" description="Disordered" evidence="5">
    <location>
        <begin position="286"/>
        <end position="323"/>
    </location>
</feature>
<feature type="region of interest" description="Disordered" evidence="5">
    <location>
        <begin position="339"/>
        <end position="359"/>
    </location>
</feature>
<feature type="region of interest" description="Disordered" evidence="5">
    <location>
        <begin position="415"/>
        <end position="505"/>
    </location>
</feature>
<feature type="region of interest" description="Disordered" evidence="5">
    <location>
        <begin position="520"/>
        <end position="546"/>
    </location>
</feature>
<feature type="region of interest" description="Disordered" evidence="5">
    <location>
        <begin position="560"/>
        <end position="733"/>
    </location>
</feature>
<feature type="region of interest" description="Disordered" evidence="5">
    <location>
        <begin position="1209"/>
        <end position="1228"/>
    </location>
</feature>
<feature type="region of interest" description="Disordered" evidence="5">
    <location>
        <begin position="1233"/>
        <end position="1252"/>
    </location>
</feature>
<feature type="region of interest" description="Disordered" evidence="5">
    <location>
        <begin position="1874"/>
        <end position="1893"/>
    </location>
</feature>
<feature type="region of interest" description="Disordered" evidence="5">
    <location>
        <begin position="1933"/>
        <end position="1952"/>
    </location>
</feature>
<feature type="region of interest" description="Disordered" evidence="5">
    <location>
        <begin position="1962"/>
        <end position="2017"/>
    </location>
</feature>
<feature type="coiled-coil region" evidence="1">
    <location>
        <begin position="1139"/>
        <end position="1164"/>
    </location>
</feature>
<feature type="compositionally biased region" description="Basic and acidic residues" evidence="5">
    <location>
        <begin position="1"/>
        <end position="10"/>
    </location>
</feature>
<feature type="compositionally biased region" description="Polar residues" evidence="5">
    <location>
        <begin position="19"/>
        <end position="32"/>
    </location>
</feature>
<feature type="compositionally biased region" description="Low complexity" evidence="5">
    <location>
        <begin position="68"/>
        <end position="81"/>
    </location>
</feature>
<feature type="compositionally biased region" description="Polar residues" evidence="5">
    <location>
        <begin position="82"/>
        <end position="104"/>
    </location>
</feature>
<feature type="compositionally biased region" description="Low complexity" evidence="5">
    <location>
        <begin position="105"/>
        <end position="145"/>
    </location>
</feature>
<feature type="compositionally biased region" description="Low complexity" evidence="5">
    <location>
        <begin position="184"/>
        <end position="244"/>
    </location>
</feature>
<feature type="compositionally biased region" description="Polar residues" evidence="5">
    <location>
        <begin position="289"/>
        <end position="304"/>
    </location>
</feature>
<feature type="compositionally biased region" description="Low complexity" evidence="5">
    <location>
        <begin position="305"/>
        <end position="318"/>
    </location>
</feature>
<feature type="compositionally biased region" description="Low complexity" evidence="5">
    <location>
        <begin position="344"/>
        <end position="359"/>
    </location>
</feature>
<feature type="compositionally biased region" description="Low complexity" evidence="5">
    <location>
        <begin position="415"/>
        <end position="447"/>
    </location>
</feature>
<feature type="compositionally biased region" description="Polar residues" evidence="5">
    <location>
        <begin position="448"/>
        <end position="468"/>
    </location>
</feature>
<feature type="compositionally biased region" description="Low complexity" evidence="5">
    <location>
        <begin position="469"/>
        <end position="485"/>
    </location>
</feature>
<feature type="compositionally biased region" description="Low complexity" evidence="5">
    <location>
        <begin position="520"/>
        <end position="545"/>
    </location>
</feature>
<feature type="compositionally biased region" description="Low complexity" evidence="5">
    <location>
        <begin position="565"/>
        <end position="600"/>
    </location>
</feature>
<feature type="compositionally biased region" description="Polar residues" evidence="5">
    <location>
        <begin position="614"/>
        <end position="628"/>
    </location>
</feature>
<feature type="compositionally biased region" description="Low complexity" evidence="5">
    <location>
        <begin position="657"/>
        <end position="727"/>
    </location>
</feature>
<feature type="compositionally biased region" description="Low complexity" evidence="5">
    <location>
        <begin position="1878"/>
        <end position="1893"/>
    </location>
</feature>
<feature type="compositionally biased region" description="Low complexity" evidence="5">
    <location>
        <begin position="1935"/>
        <end position="1952"/>
    </location>
</feature>
<feature type="compositionally biased region" description="Low complexity" evidence="5">
    <location>
        <begin position="1962"/>
        <end position="2002"/>
    </location>
</feature>
<feature type="modified residue" description="Phosphohistidine; by autocatalysis" evidence="3">
    <location>
        <position position="1396"/>
    </location>
</feature>
<feature type="modified residue" description="4-aspartylphosphate" evidence="4">
    <location>
        <position position="2076"/>
    </location>
</feature>
<feature type="mutagenesis site" description="Impaired function. Normal function; when associated with N-2076." evidence="6">
    <original>H</original>
    <variation>Q</variation>
    <location>
        <position position="1396"/>
    </location>
</feature>
<feature type="mutagenesis site" description="Impaired function. Normal function; when associated with Q-1396." evidence="6">
    <original>D</original>
    <variation>N</variation>
    <location>
        <position position="2076"/>
    </location>
</feature>
<feature type="sequence conflict" description="In Ref. 1; AAC47300." evidence="9" ref="1">
    <original>S</original>
    <variation>A</variation>
    <location>
        <position position="1319"/>
    </location>
</feature>
<feature type="sequence conflict" description="In Ref. 1; AAC47300." evidence="9" ref="1">
    <original>L</original>
    <variation>R</variation>
    <location>
        <position position="1509"/>
    </location>
</feature>
<name>DHKA_DICDI</name>
<comment type="function">
    <text evidence="6 7">Acts as a receptor histidine kinase for the cytokinin SDF-2 in a signal transduction pathway that regulates prestalk gene expression and controls terminal differentiation of prespore cells. Binding of SDF-2 to this protein inhibits phosphorelay and induces rapid sporulation. This protein undergoes an ATP-dependent autophosphorylation at a conserved histidine residue in the kinase core, and a phosphoryl group is then transferred to a conserved aspartate residue in the receiver domain.</text>
</comment>
<comment type="catalytic activity">
    <reaction evidence="6">
        <text>ATP + protein L-histidine = ADP + protein N-phospho-L-histidine.</text>
        <dbReference type="EC" id="2.7.13.3"/>
    </reaction>
</comment>
<comment type="subunit">
    <text evidence="6">Interacts with SDF-2, an acbA peptide involved in sporulation.</text>
</comment>
<comment type="subcellular location">
    <subcellularLocation>
        <location evidence="9">Cell membrane</location>
        <topology evidence="9">Multi-pass membrane protein</topology>
    </subcellularLocation>
</comment>
<comment type="developmental stage">
    <text evidence="8">Expressed from 8 hours following initiation of development, prior to the appearance of mound tips. Subsequently persists throughout development.</text>
</comment>
<gene>
    <name type="primary">dhkA</name>
    <name type="ORF">DDB_G0280961</name>
</gene>
<keyword id="KW-0067">ATP-binding</keyword>
<keyword id="KW-1003">Cell membrane</keyword>
<keyword id="KW-0175">Coiled coil</keyword>
<keyword id="KW-0932">Cytokinin signaling pathway</keyword>
<keyword id="KW-0217">Developmental protein</keyword>
<keyword id="KW-0221">Differentiation</keyword>
<keyword id="KW-0418">Kinase</keyword>
<keyword id="KW-0472">Membrane</keyword>
<keyword id="KW-0547">Nucleotide-binding</keyword>
<keyword id="KW-0597">Phosphoprotein</keyword>
<keyword id="KW-1185">Reference proteome</keyword>
<keyword id="KW-0749">Sporulation</keyword>
<keyword id="KW-0808">Transferase</keyword>
<keyword id="KW-0812">Transmembrane</keyword>
<keyword id="KW-1133">Transmembrane helix</keyword>
<dbReference type="EC" id="2.7.13.3"/>
<dbReference type="EMBL" id="U42597">
    <property type="protein sequence ID" value="AAC47300.1"/>
    <property type="molecule type" value="mRNA"/>
</dbReference>
<dbReference type="EMBL" id="AAFI02000040">
    <property type="protein sequence ID" value="EAL66777.1"/>
    <property type="molecule type" value="Genomic_DNA"/>
</dbReference>
<dbReference type="PIR" id="S71629">
    <property type="entry name" value="S71629"/>
</dbReference>
<dbReference type="RefSeq" id="XP_640889.1">
    <property type="nucleotide sequence ID" value="XM_635797.1"/>
</dbReference>
<dbReference type="SMR" id="Q54U87"/>
<dbReference type="FunCoup" id="Q54U87">
    <property type="interactions" value="1"/>
</dbReference>
<dbReference type="STRING" id="44689.Q54U87"/>
<dbReference type="GlyGen" id="Q54U87">
    <property type="glycosylation" value="1 site"/>
</dbReference>
<dbReference type="PaxDb" id="44689-DDB0215354"/>
<dbReference type="EnsemblProtists" id="EAL66777">
    <property type="protein sequence ID" value="EAL66777"/>
    <property type="gene ID" value="DDB_G0280961"/>
</dbReference>
<dbReference type="GeneID" id="8622946"/>
<dbReference type="KEGG" id="ddi:DDB_G0280961"/>
<dbReference type="dictyBase" id="DDB_G0280961">
    <property type="gene designation" value="dhkA"/>
</dbReference>
<dbReference type="VEuPathDB" id="AmoebaDB:DDB_G0280961"/>
<dbReference type="eggNOG" id="KOG0519">
    <property type="taxonomic scope" value="Eukaryota"/>
</dbReference>
<dbReference type="HOGENOM" id="CLU_231770_0_0_1"/>
<dbReference type="InParanoid" id="Q54U87"/>
<dbReference type="OMA" id="SIMEIEC"/>
<dbReference type="PRO" id="PR:Q54U87"/>
<dbReference type="Proteomes" id="UP000002195">
    <property type="component" value="Chromosome 3"/>
</dbReference>
<dbReference type="GO" id="GO:0009898">
    <property type="term" value="C:cytoplasmic side of plasma membrane"/>
    <property type="evidence" value="ECO:0000314"/>
    <property type="project" value="dictyBase"/>
</dbReference>
<dbReference type="GO" id="GO:0009897">
    <property type="term" value="C:external side of plasma membrane"/>
    <property type="evidence" value="ECO:0000314"/>
    <property type="project" value="dictyBase"/>
</dbReference>
<dbReference type="GO" id="GO:0005886">
    <property type="term" value="C:plasma membrane"/>
    <property type="evidence" value="ECO:0000314"/>
    <property type="project" value="dictyBase"/>
</dbReference>
<dbReference type="GO" id="GO:0005524">
    <property type="term" value="F:ATP binding"/>
    <property type="evidence" value="ECO:0000304"/>
    <property type="project" value="dictyBase"/>
</dbReference>
<dbReference type="GO" id="GO:0000155">
    <property type="term" value="F:phosphorelay sensor kinase activity"/>
    <property type="evidence" value="ECO:0000315"/>
    <property type="project" value="dictyBase"/>
</dbReference>
<dbReference type="GO" id="GO:0009784">
    <property type="term" value="F:transmembrane receptor histidine kinase activity"/>
    <property type="evidence" value="ECO:0000314"/>
    <property type="project" value="dictyBase"/>
</dbReference>
<dbReference type="GO" id="GO:0140582">
    <property type="term" value="P:adenylate cyclase-activating G protein-coupled cAMP receptor signaling pathway"/>
    <property type="evidence" value="ECO:0000315"/>
    <property type="project" value="dictyBase"/>
</dbReference>
<dbReference type="GO" id="GO:0030154">
    <property type="term" value="P:cell differentiation"/>
    <property type="evidence" value="ECO:0007669"/>
    <property type="project" value="UniProtKB-KW"/>
</dbReference>
<dbReference type="GO" id="GO:0009736">
    <property type="term" value="P:cytokinin-activated signaling pathway"/>
    <property type="evidence" value="ECO:0007669"/>
    <property type="project" value="UniProtKB-KW"/>
</dbReference>
<dbReference type="GO" id="GO:0030587">
    <property type="term" value="P:sorocarp development"/>
    <property type="evidence" value="ECO:0000315"/>
    <property type="project" value="dictyBase"/>
</dbReference>
<dbReference type="GO" id="GO:0031288">
    <property type="term" value="P:sorocarp morphogenesis"/>
    <property type="evidence" value="ECO:0000316"/>
    <property type="project" value="dictyBase"/>
</dbReference>
<dbReference type="GO" id="GO:0031150">
    <property type="term" value="P:sorocarp stalk development"/>
    <property type="evidence" value="ECO:0000315"/>
    <property type="project" value="dictyBase"/>
</dbReference>
<dbReference type="GO" id="GO:0030435">
    <property type="term" value="P:sporulation resulting in formation of a cellular spore"/>
    <property type="evidence" value="ECO:0000315"/>
    <property type="project" value="dictyBase"/>
</dbReference>
<dbReference type="CDD" id="cd16922">
    <property type="entry name" value="HATPase_EvgS-ArcB-TorS-like"/>
    <property type="match status" value="1"/>
</dbReference>
<dbReference type="CDD" id="cd00082">
    <property type="entry name" value="HisKA"/>
    <property type="match status" value="1"/>
</dbReference>
<dbReference type="CDD" id="cd00130">
    <property type="entry name" value="PAS"/>
    <property type="match status" value="1"/>
</dbReference>
<dbReference type="CDD" id="cd17546">
    <property type="entry name" value="REC_hyHK_CKI1_RcsC-like"/>
    <property type="match status" value="1"/>
</dbReference>
<dbReference type="FunFam" id="1.10.287.130:FF:000003">
    <property type="entry name" value="Histidine kinase"/>
    <property type="match status" value="1"/>
</dbReference>
<dbReference type="FunFam" id="3.30.450.350:FF:000001">
    <property type="entry name" value="Histidine kinase 4"/>
    <property type="match status" value="1"/>
</dbReference>
<dbReference type="FunFam" id="3.30.565.10:FF:000010">
    <property type="entry name" value="Sensor histidine kinase RcsC"/>
    <property type="match status" value="1"/>
</dbReference>
<dbReference type="Gene3D" id="1.10.287.130">
    <property type="match status" value="1"/>
</dbReference>
<dbReference type="Gene3D" id="3.40.50.2300">
    <property type="match status" value="1"/>
</dbReference>
<dbReference type="Gene3D" id="3.30.450.350">
    <property type="entry name" value="CHASE domain"/>
    <property type="match status" value="1"/>
</dbReference>
<dbReference type="Gene3D" id="3.30.565.10">
    <property type="entry name" value="Histidine kinase-like ATPase, C-terminal domain"/>
    <property type="match status" value="1"/>
</dbReference>
<dbReference type="Gene3D" id="3.30.450.20">
    <property type="entry name" value="PAS domain"/>
    <property type="match status" value="2"/>
</dbReference>
<dbReference type="InterPro" id="IPR050956">
    <property type="entry name" value="2C_system_His_kinase"/>
</dbReference>
<dbReference type="InterPro" id="IPR006189">
    <property type="entry name" value="CHASE_dom"/>
</dbReference>
<dbReference type="InterPro" id="IPR042240">
    <property type="entry name" value="CHASE_sf"/>
</dbReference>
<dbReference type="InterPro" id="IPR011006">
    <property type="entry name" value="CheY-like_superfamily"/>
</dbReference>
<dbReference type="InterPro" id="IPR036890">
    <property type="entry name" value="HATPase_C_sf"/>
</dbReference>
<dbReference type="InterPro" id="IPR005467">
    <property type="entry name" value="His_kinase_dom"/>
</dbReference>
<dbReference type="InterPro" id="IPR003661">
    <property type="entry name" value="HisK_dim/P_dom"/>
</dbReference>
<dbReference type="InterPro" id="IPR036097">
    <property type="entry name" value="HisK_dim/P_sf"/>
</dbReference>
<dbReference type="InterPro" id="IPR001610">
    <property type="entry name" value="PAC"/>
</dbReference>
<dbReference type="InterPro" id="IPR000014">
    <property type="entry name" value="PAS"/>
</dbReference>
<dbReference type="InterPro" id="IPR035965">
    <property type="entry name" value="PAS-like_dom_sf"/>
</dbReference>
<dbReference type="InterPro" id="IPR013655">
    <property type="entry name" value="PAS_fold_3"/>
</dbReference>
<dbReference type="InterPro" id="IPR004358">
    <property type="entry name" value="Sig_transdc_His_kin-like_C"/>
</dbReference>
<dbReference type="InterPro" id="IPR001789">
    <property type="entry name" value="Sig_transdc_resp-reg_receiver"/>
</dbReference>
<dbReference type="PANTHER" id="PTHR43719:SF10">
    <property type="entry name" value="HYBRID SIGNAL TRANSDUCTION HISTIDINE KINASE A"/>
    <property type="match status" value="1"/>
</dbReference>
<dbReference type="PANTHER" id="PTHR43719">
    <property type="entry name" value="TWO-COMPONENT HISTIDINE KINASE"/>
    <property type="match status" value="1"/>
</dbReference>
<dbReference type="Pfam" id="PF03924">
    <property type="entry name" value="CHASE"/>
    <property type="match status" value="1"/>
</dbReference>
<dbReference type="Pfam" id="PF02518">
    <property type="entry name" value="HATPase_c"/>
    <property type="match status" value="1"/>
</dbReference>
<dbReference type="Pfam" id="PF00512">
    <property type="entry name" value="HisKA"/>
    <property type="match status" value="1"/>
</dbReference>
<dbReference type="Pfam" id="PF08447">
    <property type="entry name" value="PAS_3"/>
    <property type="match status" value="1"/>
</dbReference>
<dbReference type="Pfam" id="PF00072">
    <property type="entry name" value="Response_reg"/>
    <property type="match status" value="1"/>
</dbReference>
<dbReference type="PRINTS" id="PR00344">
    <property type="entry name" value="BCTRLSENSOR"/>
</dbReference>
<dbReference type="SMART" id="SM01079">
    <property type="entry name" value="CHASE"/>
    <property type="match status" value="1"/>
</dbReference>
<dbReference type="SMART" id="SM00387">
    <property type="entry name" value="HATPase_c"/>
    <property type="match status" value="1"/>
</dbReference>
<dbReference type="SMART" id="SM00388">
    <property type="entry name" value="HisKA"/>
    <property type="match status" value="1"/>
</dbReference>
<dbReference type="SMART" id="SM00086">
    <property type="entry name" value="PAC"/>
    <property type="match status" value="1"/>
</dbReference>
<dbReference type="SMART" id="SM00448">
    <property type="entry name" value="REC"/>
    <property type="match status" value="1"/>
</dbReference>
<dbReference type="SUPFAM" id="SSF55874">
    <property type="entry name" value="ATPase domain of HSP90 chaperone/DNA topoisomerase II/histidine kinase"/>
    <property type="match status" value="1"/>
</dbReference>
<dbReference type="SUPFAM" id="SSF52172">
    <property type="entry name" value="CheY-like"/>
    <property type="match status" value="1"/>
</dbReference>
<dbReference type="SUPFAM" id="SSF47384">
    <property type="entry name" value="Homodimeric domain of signal transducing histidine kinase"/>
    <property type="match status" value="1"/>
</dbReference>
<dbReference type="SUPFAM" id="SSF55785">
    <property type="entry name" value="PYP-like sensor domain (PAS domain)"/>
    <property type="match status" value="1"/>
</dbReference>
<dbReference type="PROSITE" id="PS50839">
    <property type="entry name" value="CHASE"/>
    <property type="match status" value="1"/>
</dbReference>
<dbReference type="PROSITE" id="PS50109">
    <property type="entry name" value="HIS_KIN"/>
    <property type="match status" value="1"/>
</dbReference>
<dbReference type="PROSITE" id="PS50110">
    <property type="entry name" value="RESPONSE_REGULATORY"/>
    <property type="match status" value="1"/>
</dbReference>
<reference key="1">
    <citation type="journal article" date="1996" name="EMBO J.">
        <title>A two-component histidine kinase gene that functions in Dictyostelium development.</title>
        <authorList>
            <person name="Wang N."/>
            <person name="Shaulsky G."/>
            <person name="Escalante R."/>
            <person name="Loomis W.F."/>
        </authorList>
    </citation>
    <scope>NUCLEOTIDE SEQUENCE [GENOMIC DNA / MRNA]</scope>
    <scope>MUTAGENESIS</scope>
    <scope>CHARACTERIZATION</scope>
    <scope>DEVELOPMENTAL STAGE</scope>
    <source>
        <strain>AX4</strain>
    </source>
</reference>
<reference key="2">
    <citation type="journal article" date="2005" name="Nature">
        <title>The genome of the social amoeba Dictyostelium discoideum.</title>
        <authorList>
            <person name="Eichinger L."/>
            <person name="Pachebat J.A."/>
            <person name="Gloeckner G."/>
            <person name="Rajandream M.A."/>
            <person name="Sucgang R."/>
            <person name="Berriman M."/>
            <person name="Song J."/>
            <person name="Olsen R."/>
            <person name="Szafranski K."/>
            <person name="Xu Q."/>
            <person name="Tunggal B."/>
            <person name="Kummerfeld S."/>
            <person name="Madera M."/>
            <person name="Konfortov B.A."/>
            <person name="Rivero F."/>
            <person name="Bankier A.T."/>
            <person name="Lehmann R."/>
            <person name="Hamlin N."/>
            <person name="Davies R."/>
            <person name="Gaudet P."/>
            <person name="Fey P."/>
            <person name="Pilcher K."/>
            <person name="Chen G."/>
            <person name="Saunders D."/>
            <person name="Sodergren E.J."/>
            <person name="Davis P."/>
            <person name="Kerhornou A."/>
            <person name="Nie X."/>
            <person name="Hall N."/>
            <person name="Anjard C."/>
            <person name="Hemphill L."/>
            <person name="Bason N."/>
            <person name="Farbrother P."/>
            <person name="Desany B."/>
            <person name="Just E."/>
            <person name="Morio T."/>
            <person name="Rost R."/>
            <person name="Churcher C.M."/>
            <person name="Cooper J."/>
            <person name="Haydock S."/>
            <person name="van Driessche N."/>
            <person name="Cronin A."/>
            <person name="Goodhead I."/>
            <person name="Muzny D.M."/>
            <person name="Mourier T."/>
            <person name="Pain A."/>
            <person name="Lu M."/>
            <person name="Harper D."/>
            <person name="Lindsay R."/>
            <person name="Hauser H."/>
            <person name="James K.D."/>
            <person name="Quiles M."/>
            <person name="Madan Babu M."/>
            <person name="Saito T."/>
            <person name="Buchrieser C."/>
            <person name="Wardroper A."/>
            <person name="Felder M."/>
            <person name="Thangavelu M."/>
            <person name="Johnson D."/>
            <person name="Knights A."/>
            <person name="Loulseged H."/>
            <person name="Mungall K.L."/>
            <person name="Oliver K."/>
            <person name="Price C."/>
            <person name="Quail M.A."/>
            <person name="Urushihara H."/>
            <person name="Hernandez J."/>
            <person name="Rabbinowitsch E."/>
            <person name="Steffen D."/>
            <person name="Sanders M."/>
            <person name="Ma J."/>
            <person name="Kohara Y."/>
            <person name="Sharp S."/>
            <person name="Simmonds M.N."/>
            <person name="Spiegler S."/>
            <person name="Tivey A."/>
            <person name="Sugano S."/>
            <person name="White B."/>
            <person name="Walker D."/>
            <person name="Woodward J.R."/>
            <person name="Winckler T."/>
            <person name="Tanaka Y."/>
            <person name="Shaulsky G."/>
            <person name="Schleicher M."/>
            <person name="Weinstock G.M."/>
            <person name="Rosenthal A."/>
            <person name="Cox E.C."/>
            <person name="Chisholm R.L."/>
            <person name="Gibbs R.A."/>
            <person name="Loomis W.F."/>
            <person name="Platzer M."/>
            <person name="Kay R.R."/>
            <person name="Williams J.G."/>
            <person name="Dear P.H."/>
            <person name="Noegel A.A."/>
            <person name="Barrell B.G."/>
            <person name="Kuspa A."/>
        </authorList>
    </citation>
    <scope>NUCLEOTIDE SEQUENCE [LARGE SCALE GENOMIC DNA]</scope>
    <source>
        <strain>AX4</strain>
    </source>
</reference>
<reference key="3">
    <citation type="journal article" date="1999" name="Mol. Cell. Biol.">
        <title>SDF-2 induction of terminal differentiation in Dictyostelium discoideum is mediated by the membrane-spanning sensor kinase DhkA.</title>
        <authorList>
            <person name="Wang N."/>
            <person name="Soderbom F."/>
            <person name="Anjard C."/>
            <person name="Shaulsky G."/>
            <person name="Loomis W.F."/>
        </authorList>
    </citation>
    <scope>FUNCTION</scope>
    <scope>CATALYTIC ACTIVITY</scope>
    <scope>MUTAGENESIS OF HIS-1396 AND ASP-2076</scope>
    <scope>INTERACTION WITH SDF-2</scope>
    <scope>SUBCELLULAR LOCATION</scope>
</reference>
<reference key="4">
    <citation type="journal article" date="2005" name="Proc. Natl. Acad. Sci. U.S.A.">
        <title>Peptide signaling during terminal differentiation of Dictyostelium.</title>
        <authorList>
            <person name="Anjard C."/>
            <person name="Loomis W.F."/>
        </authorList>
    </citation>
    <scope>FUNCTION</scope>
</reference>
<protein>
    <recommendedName>
        <fullName>Hybrid signal transduction histidine kinase A</fullName>
        <ecNumber>2.7.13.3</ecNumber>
    </recommendedName>
</protein>
<accession>Q54U87</accession>
<accession>Q23863</accession>
<sequence>MELKTFKDLNDDIIGDTSPVINTGDQPNPLRTQQQQLQQQQQQQQQQQQQQQQQQQQQQQQQQQQQHHIPQQLYQKQQQQQHSHSYGNHSFIHNVSPTSPSYDINNNNNNNNNNNNNNNNNNNNNNNSNNNNNNNNNNKNNYNNNYYYSPIENSNISKSLEESVLNQFPHNFNLNSSNNNYLNNSSSLHNINQSVNSLSNNNNNQTNQQPINNNNNNNNNNNNNNSNNSNNSNNNNNGNNNNNITDSPTKSKRHSTYETNIGSHQRRKSIQSLIANSAIHSFSKLKNKPLSSSTPSTVNTCGAVNNNSNNNNNNNNNSTGSLGAIPMDRSFDGNINTITEESTGGNNSPRSNCGSNCGSNGGIPLSPRNLSSLNSGVNVSPRNIHLNNLNNNSSNLPPLSPRHINFHINVSNLNNNNNNNINPNNNPNNSNNSNNNVSPRNNNHNISPRGSNISPRSNNGGSTTISPRNISNNNNIINNINNNNILTPPRNSPRLENVNPTNSPRLLATSLNSTLPIVSSLTSSNNNNQSNNNTNPSINNNNGRNGHCIQTISEEILGNKPVVYNNGNNNNNNNTNNSTTSNNNITTNNNNNNNNNINNNVLSTPRKRTKGNHSKTNSLQDFETSSMNGGDDSISGAGSGGSLRRRNKDDNDENDGNSNNTNSNNSNNNNNNNNNSSNNNNNNSNNNNNNNNNNNNNNNNNNNNNNNNNNNNNNNNNNNNNNNNNNNYHNGATMMMSHNHQSIGMSSSPKKNNFKPFSRNCSLMGMGRRAWAIILGLFIVGSSISILATLVLRYSEENSIADDFARVARDRFTMLRIEFNNRLYITQTLSLLLSVFPSTSEDQFVPFSKLWSDNAEGLEGIMWAPRVSNLDRYTWEIEHSVKIREIVTNPNNSSDMRDVPAAAASDYYPILFSEPQSSNDHFKGYNIYSDMWRRPSLNKTRDTGEKVSVASPYINKLANVPKNSRSNVLLYIYQAVYTYGKVLSTVEDRRHEVIGFASCRFFISRMVSASLQRLTEEDSLDLYVFDLDSTPIGELIYYRASNAGNDDGSSPTNIMNGKMLEDRSDMIYYNTMNVGGRNWMIALRPSRKFTNKHYTFYPYAIGGVCMLLSALVSFWFAVNTKHNIKLSATNEDLHKEIYNRKLAEKALAESQERLELAMEGSEDAVWDWKVNTGELHISSRWFQILKAHDTSYQSRTLYEELKSSSTNNLNFKGDSKNGGSNNGTFNLFKNGKVDSSSPQSITNVNTTNGGGGGELRKSNSGYLYNDELFSPIILEEMVSSPNTHQLAIWNMKFLAELIHPDDKQKFISEIKKTITRETSIMEIECRMRKKYGGYLYIIMRGKVVSNETSFKDNSLRMAGTLRDMTSRKDMQRLILEKEAAEEANKAKSAFVATVSHEVRTPLSGVIGVSDLLLETNLSEEQRDYVQTIQKSSQALLTIINDILDYSKLESRQLKMETLPFSIIETCQAVIHMLSVAANDDVDILLRVPPNVPRIIFGDAMRMRQVLLNLLSNAIKFTSRGHVLTDISVDDSIPPTNTEEEIIHLCITIEDTGIGIPQSLFDSIFEPFSQADNSTTRKYGGTGLGLSITKRLIEEVMGGTIQVSSIVGQGSKFKCIIPFLLPNTSPSDLNLISPSSLPKPFINRSPKSTYSFTDKKNSVPSTPIPSGDILINKVCLLICRDTVTELVFKEQLEWLGMIVKQVPRNVIDSIKNTILNNNNNNNNNNNNNNNNSNNSSSIISPSSLDYSDENEHLDLVLIDLEILTEHLKIPSNVPIIFITPTKFNISKHNGILNKWITKSPNQRVELIRRPAITDKLIPIISKCIKSQVQFTSGSSQLQSQQANLQQQLLHQQLCNNGQTLNNNYNSGGIGGGGGGGGSNTMNGSSGNLSNNNNFGQTPLSSGLVLLVHTGRTPPLFNNNGNSIIPPLELAVDHHGNQQQQLYQQQQQQQNNSSGNFQQFYQQQNNNSNNSFTPTLPNENSNNSIMNNSLNNNNTTPSNVTPTLFTSSPLDLQGRDTPVLQPPAYRKKALIVEDNELNRKVLAQLFKKIDWTISFAENGREALKEITGERCFDIVFMDCQMPVLDGFQTTKIIRSKERENNWKRMNIVALSAGSSSSFVQDCLDSGMDSFMGKPITLATLKDALAKWGGYNN</sequence>
<organism>
    <name type="scientific">Dictyostelium discoideum</name>
    <name type="common">Social amoeba</name>
    <dbReference type="NCBI Taxonomy" id="44689"/>
    <lineage>
        <taxon>Eukaryota</taxon>
        <taxon>Amoebozoa</taxon>
        <taxon>Evosea</taxon>
        <taxon>Eumycetozoa</taxon>
        <taxon>Dictyostelia</taxon>
        <taxon>Dictyosteliales</taxon>
        <taxon>Dictyosteliaceae</taxon>
        <taxon>Dictyostelium</taxon>
    </lineage>
</organism>
<evidence type="ECO:0000255" key="1"/>
<evidence type="ECO:0000255" key="2">
    <source>
        <dbReference type="PROSITE-ProRule" id="PRU00049"/>
    </source>
</evidence>
<evidence type="ECO:0000255" key="3">
    <source>
        <dbReference type="PROSITE-ProRule" id="PRU00107"/>
    </source>
</evidence>
<evidence type="ECO:0000255" key="4">
    <source>
        <dbReference type="PROSITE-ProRule" id="PRU00169"/>
    </source>
</evidence>
<evidence type="ECO:0000256" key="5">
    <source>
        <dbReference type="SAM" id="MobiDB-lite"/>
    </source>
</evidence>
<evidence type="ECO:0000269" key="6">
    <source>
    </source>
</evidence>
<evidence type="ECO:0000269" key="7">
    <source>
    </source>
</evidence>
<evidence type="ECO:0000269" key="8">
    <source>
    </source>
</evidence>
<evidence type="ECO:0000305" key="9"/>